<proteinExistence type="inferred from homology"/>
<geneLocation type="plasmid">
    <name>pIP816</name>
</geneLocation>
<reference key="1">
    <citation type="journal article" date="1993" name="J. Bacteriol.">
        <title>Characterization of Tn1546, a Tn3-related transposon conferring glycopeptide resistance by synthesis of depsipeptide peptidoglycan precursors in Enterococcus faecium BM4147.</title>
        <authorList>
            <person name="Arthur M."/>
            <person name="Molinas C."/>
            <person name="Depardieu F."/>
            <person name="Courvalin P."/>
        </authorList>
    </citation>
    <scope>NUCLEOTIDE SEQUENCE [GENOMIC DNA]</scope>
    <source>
        <strain>BM4147</strain>
    </source>
</reference>
<protein>
    <recommendedName>
        <fullName>Transposon Tn1546 resolvase</fullName>
    </recommendedName>
</protein>
<accession>Q06237</accession>
<feature type="chain" id="PRO_0000196374" description="Transposon Tn1546 resolvase">
    <location>
        <begin position="1"/>
        <end position="191"/>
    </location>
</feature>
<feature type="domain" description="Resolvase/invertase-type recombinase catalytic" evidence="2">
    <location>
        <begin position="2"/>
        <end position="138"/>
    </location>
</feature>
<feature type="DNA-binding region" description="H-T-H motif" evidence="1">
    <location>
        <begin position="168"/>
        <end position="187"/>
    </location>
</feature>
<feature type="active site" description="O-(5'-phospho-DNA)-serine intermediate" evidence="2">
    <location>
        <position position="10"/>
    </location>
</feature>
<evidence type="ECO:0000255" key="1"/>
<evidence type="ECO:0000255" key="2">
    <source>
        <dbReference type="PROSITE-ProRule" id="PRU01072"/>
    </source>
</evidence>
<evidence type="ECO:0000305" key="3"/>
<comment type="function">
    <text>Resolvase catalyzes the resolution (a site-specific recombination) of the cointegrated replicon to yield the final transposition products.</text>
</comment>
<comment type="similarity">
    <text evidence="3">Belongs to the site-specific recombinase resolvase family.</text>
</comment>
<organism>
    <name type="scientific">Enterococcus faecium</name>
    <name type="common">Streptococcus faecium</name>
    <dbReference type="NCBI Taxonomy" id="1352"/>
    <lineage>
        <taxon>Bacteria</taxon>
        <taxon>Bacillati</taxon>
        <taxon>Bacillota</taxon>
        <taxon>Bacilli</taxon>
        <taxon>Lactobacillales</taxon>
        <taxon>Enterococcaceae</taxon>
        <taxon>Enterococcus</taxon>
    </lineage>
</organism>
<keyword id="KW-0229">DNA integration</keyword>
<keyword id="KW-0233">DNA recombination</keyword>
<keyword id="KW-0238">DNA-binding</keyword>
<keyword id="KW-0614">Plasmid</keyword>
<keyword id="KW-0814">Transposable element</keyword>
<sequence>MRKIGYIRVSSTNQNPSRQFQQLNEIGMDIIYEEKVSGATKDREQLQKVLDDLQEDDIIYVTDLTRITRSTQDLFELIDNIRDKKASLKSLKDTWLDLSEDNPYSQFLITVMAGVNQLERDLIRMRQREGIELAKKEGKFKGRLKKYHKNHAGMNYAVKLYKEGNMTVNQICEITNVSRASLYRKLSEVNN</sequence>
<dbReference type="EMBL" id="M97297">
    <property type="protein sequence ID" value="AAA65952.1"/>
    <property type="molecule type" value="Genomic_DNA"/>
</dbReference>
<dbReference type="PIR" id="B40628">
    <property type="entry name" value="B40628"/>
</dbReference>
<dbReference type="RefSeq" id="WP_001226076.1">
    <property type="nucleotide sequence ID" value="NZ_WSZC01000102.1"/>
</dbReference>
<dbReference type="RefSeq" id="YP_001019039.1">
    <property type="nucleotide sequence ID" value="NC_008821.1"/>
</dbReference>
<dbReference type="RefSeq" id="YP_001974800.1">
    <property type="nucleotide sequence ID" value="NC_010980.1"/>
</dbReference>
<dbReference type="RefSeq" id="YP_002128395.1">
    <property type="nucleotide sequence ID" value="NC_011140.1"/>
</dbReference>
<dbReference type="RefSeq" id="YP_004172620.1">
    <property type="nucleotide sequence ID" value="NC_014959.1"/>
</dbReference>
<dbReference type="RefSeq" id="YP_976081.1">
    <property type="nucleotide sequence ID" value="NC_008768.1"/>
</dbReference>
<dbReference type="SMR" id="Q06237"/>
<dbReference type="GO" id="GO:0003677">
    <property type="term" value="F:DNA binding"/>
    <property type="evidence" value="ECO:0007669"/>
    <property type="project" value="UniProtKB-KW"/>
</dbReference>
<dbReference type="GO" id="GO:0000150">
    <property type="term" value="F:DNA strand exchange activity"/>
    <property type="evidence" value="ECO:0007669"/>
    <property type="project" value="InterPro"/>
</dbReference>
<dbReference type="GO" id="GO:0015074">
    <property type="term" value="P:DNA integration"/>
    <property type="evidence" value="ECO:0007669"/>
    <property type="project" value="UniProtKB-KW"/>
</dbReference>
<dbReference type="CDD" id="cd03768">
    <property type="entry name" value="SR_ResInv"/>
    <property type="match status" value="1"/>
</dbReference>
<dbReference type="Gene3D" id="1.10.10.60">
    <property type="entry name" value="Homeodomain-like"/>
    <property type="match status" value="1"/>
</dbReference>
<dbReference type="Gene3D" id="3.40.50.1390">
    <property type="entry name" value="Resolvase, N-terminal catalytic domain"/>
    <property type="match status" value="1"/>
</dbReference>
<dbReference type="InterPro" id="IPR006118">
    <property type="entry name" value="Recombinase_CS"/>
</dbReference>
<dbReference type="InterPro" id="IPR006119">
    <property type="entry name" value="Resolv_N"/>
</dbReference>
<dbReference type="InterPro" id="IPR036162">
    <property type="entry name" value="Resolvase-like_N_sf"/>
</dbReference>
<dbReference type="InterPro" id="IPR006120">
    <property type="entry name" value="Resolvase_HTH_dom"/>
</dbReference>
<dbReference type="InterPro" id="IPR050639">
    <property type="entry name" value="SSR_resolvase"/>
</dbReference>
<dbReference type="PANTHER" id="PTHR30461">
    <property type="entry name" value="DNA-INVERTASE FROM LAMBDOID PROPHAGE"/>
    <property type="match status" value="1"/>
</dbReference>
<dbReference type="PANTHER" id="PTHR30461:SF26">
    <property type="entry name" value="RESOLVASE HOMOLOG YNEB"/>
    <property type="match status" value="1"/>
</dbReference>
<dbReference type="Pfam" id="PF02796">
    <property type="entry name" value="HTH_7"/>
    <property type="match status" value="1"/>
</dbReference>
<dbReference type="Pfam" id="PF00239">
    <property type="entry name" value="Resolvase"/>
    <property type="match status" value="1"/>
</dbReference>
<dbReference type="SMART" id="SM00857">
    <property type="entry name" value="Resolvase"/>
    <property type="match status" value="1"/>
</dbReference>
<dbReference type="SUPFAM" id="SSF53041">
    <property type="entry name" value="Resolvase-like"/>
    <property type="match status" value="1"/>
</dbReference>
<dbReference type="PROSITE" id="PS00397">
    <property type="entry name" value="RECOMBINASES_1"/>
    <property type="match status" value="1"/>
</dbReference>
<dbReference type="PROSITE" id="PS51736">
    <property type="entry name" value="RECOMBINASES_3"/>
    <property type="match status" value="1"/>
</dbReference>
<name>TNR6_ENTFC</name>